<organism>
    <name type="scientific">Brucella melitensis biotype 1 (strain ATCC 23456 / CCUG 17765 / NCTC 10094 / 16M)</name>
    <dbReference type="NCBI Taxonomy" id="224914"/>
    <lineage>
        <taxon>Bacteria</taxon>
        <taxon>Pseudomonadati</taxon>
        <taxon>Pseudomonadota</taxon>
        <taxon>Alphaproteobacteria</taxon>
        <taxon>Hyphomicrobiales</taxon>
        <taxon>Brucellaceae</taxon>
        <taxon>Brucella/Ochrobactrum group</taxon>
        <taxon>Brucella</taxon>
    </lineage>
</organism>
<protein>
    <recommendedName>
        <fullName evidence="1">Urease subunit gamma 2</fullName>
        <ecNumber evidence="1">3.5.1.5</ecNumber>
    </recommendedName>
    <alternativeName>
        <fullName evidence="1">Urea amidohydrolase subunit gamma 2</fullName>
    </alternativeName>
</protein>
<accession>Q8YHZ6</accession>
<dbReference type="EC" id="3.5.1.5" evidence="1"/>
<dbReference type="EMBL" id="AE008917">
    <property type="protein sequence ID" value="AAL51830.1"/>
    <property type="molecule type" value="Genomic_DNA"/>
</dbReference>
<dbReference type="PIR" id="AC3333">
    <property type="entry name" value="AC3333"/>
</dbReference>
<dbReference type="RefSeq" id="WP_002964469.1">
    <property type="nucleotide sequence ID" value="NZ_GG703780.1"/>
</dbReference>
<dbReference type="SMR" id="Q8YHZ6"/>
<dbReference type="KEGG" id="bme:BMEI0649"/>
<dbReference type="KEGG" id="bmel:DK63_778"/>
<dbReference type="PATRIC" id="fig|224914.52.peg.815"/>
<dbReference type="eggNOG" id="COG0831">
    <property type="taxonomic scope" value="Bacteria"/>
</dbReference>
<dbReference type="UniPathway" id="UPA00258">
    <property type="reaction ID" value="UER00370"/>
</dbReference>
<dbReference type="Proteomes" id="UP000000419">
    <property type="component" value="Chromosome I"/>
</dbReference>
<dbReference type="GO" id="GO:0005737">
    <property type="term" value="C:cytoplasm"/>
    <property type="evidence" value="ECO:0007669"/>
    <property type="project" value="UniProtKB-SubCell"/>
</dbReference>
<dbReference type="GO" id="GO:0016151">
    <property type="term" value="F:nickel cation binding"/>
    <property type="evidence" value="ECO:0007669"/>
    <property type="project" value="InterPro"/>
</dbReference>
<dbReference type="GO" id="GO:0009039">
    <property type="term" value="F:urease activity"/>
    <property type="evidence" value="ECO:0007669"/>
    <property type="project" value="UniProtKB-UniRule"/>
</dbReference>
<dbReference type="GO" id="GO:0043419">
    <property type="term" value="P:urea catabolic process"/>
    <property type="evidence" value="ECO:0007669"/>
    <property type="project" value="UniProtKB-UniRule"/>
</dbReference>
<dbReference type="CDD" id="cd00390">
    <property type="entry name" value="Urease_gamma"/>
    <property type="match status" value="1"/>
</dbReference>
<dbReference type="Gene3D" id="3.30.280.10">
    <property type="entry name" value="Urease, gamma-like subunit"/>
    <property type="match status" value="1"/>
</dbReference>
<dbReference type="HAMAP" id="MF_00739">
    <property type="entry name" value="Urease_gamma"/>
    <property type="match status" value="1"/>
</dbReference>
<dbReference type="InterPro" id="IPR012010">
    <property type="entry name" value="Urease_gamma"/>
</dbReference>
<dbReference type="InterPro" id="IPR002026">
    <property type="entry name" value="Urease_gamma/gamma-beta_su"/>
</dbReference>
<dbReference type="InterPro" id="IPR036463">
    <property type="entry name" value="Urease_gamma_sf"/>
</dbReference>
<dbReference type="InterPro" id="IPR050069">
    <property type="entry name" value="Urease_subunit"/>
</dbReference>
<dbReference type="NCBIfam" id="NF009712">
    <property type="entry name" value="PRK13241.1"/>
    <property type="match status" value="1"/>
</dbReference>
<dbReference type="NCBIfam" id="TIGR00193">
    <property type="entry name" value="urease_gam"/>
    <property type="match status" value="1"/>
</dbReference>
<dbReference type="PANTHER" id="PTHR33569">
    <property type="entry name" value="UREASE"/>
    <property type="match status" value="1"/>
</dbReference>
<dbReference type="PANTHER" id="PTHR33569:SF1">
    <property type="entry name" value="UREASE"/>
    <property type="match status" value="1"/>
</dbReference>
<dbReference type="Pfam" id="PF00547">
    <property type="entry name" value="Urease_gamma"/>
    <property type="match status" value="1"/>
</dbReference>
<dbReference type="PIRSF" id="PIRSF001223">
    <property type="entry name" value="Urease_gamma"/>
    <property type="match status" value="1"/>
</dbReference>
<dbReference type="SUPFAM" id="SSF54111">
    <property type="entry name" value="Urease, gamma-subunit"/>
    <property type="match status" value="1"/>
</dbReference>
<feature type="chain" id="PRO_0000098001" description="Urease subunit gamma 2">
    <location>
        <begin position="1"/>
        <end position="100"/>
    </location>
</feature>
<evidence type="ECO:0000255" key="1">
    <source>
        <dbReference type="HAMAP-Rule" id="MF_00739"/>
    </source>
</evidence>
<comment type="catalytic activity">
    <reaction evidence="1">
        <text>urea + 2 H2O + H(+) = hydrogencarbonate + 2 NH4(+)</text>
        <dbReference type="Rhea" id="RHEA:20557"/>
        <dbReference type="ChEBI" id="CHEBI:15377"/>
        <dbReference type="ChEBI" id="CHEBI:15378"/>
        <dbReference type="ChEBI" id="CHEBI:16199"/>
        <dbReference type="ChEBI" id="CHEBI:17544"/>
        <dbReference type="ChEBI" id="CHEBI:28938"/>
        <dbReference type="EC" id="3.5.1.5"/>
    </reaction>
</comment>
<comment type="pathway">
    <text evidence="1">Nitrogen metabolism; urea degradation; CO(2) and NH(3) from urea (urease route): step 1/1.</text>
</comment>
<comment type="subunit">
    <text evidence="1">Heterotrimer of UreA (gamma), UreB (beta) and UreC (alpha) subunits. Three heterotrimers associate to form the active enzyme.</text>
</comment>
<comment type="subcellular location">
    <subcellularLocation>
        <location evidence="1">Cytoplasm</location>
    </subcellularLocation>
</comment>
<comment type="similarity">
    <text evidence="1">Belongs to the urease gamma subunit family.</text>
</comment>
<gene>
    <name evidence="1" type="primary">ureA2</name>
    <name type="ordered locus">BMEI0649</name>
</gene>
<proteinExistence type="inferred from homology"/>
<sequence length="100" mass="10943">MHLTPREFDKLVIHMLSDVALKRKNKGLKLNHPEAVAVLSAYVLDGAREGKTVEEVMDGARSVLKADDVMDGVPDLLPLIQVEAVFSDGSRLVSLHNPIT</sequence>
<keyword id="KW-0963">Cytoplasm</keyword>
<keyword id="KW-0378">Hydrolase</keyword>
<reference key="1">
    <citation type="journal article" date="2002" name="Proc. Natl. Acad. Sci. U.S.A.">
        <title>The genome sequence of the facultative intracellular pathogen Brucella melitensis.</title>
        <authorList>
            <person name="DelVecchio V.G."/>
            <person name="Kapatral V."/>
            <person name="Redkar R.J."/>
            <person name="Patra G."/>
            <person name="Mujer C."/>
            <person name="Los T."/>
            <person name="Ivanova N."/>
            <person name="Anderson I."/>
            <person name="Bhattacharyya A."/>
            <person name="Lykidis A."/>
            <person name="Reznik G."/>
            <person name="Jablonski L."/>
            <person name="Larsen N."/>
            <person name="D'Souza M."/>
            <person name="Bernal A."/>
            <person name="Mazur M."/>
            <person name="Goltsman E."/>
            <person name="Selkov E."/>
            <person name="Elzer P.H."/>
            <person name="Hagius S."/>
            <person name="O'Callaghan D."/>
            <person name="Letesson J.-J."/>
            <person name="Haselkorn R."/>
            <person name="Kyrpides N.C."/>
            <person name="Overbeek R."/>
        </authorList>
    </citation>
    <scope>NUCLEOTIDE SEQUENCE [LARGE SCALE GENOMIC DNA]</scope>
    <source>
        <strain>ATCC 23456 / CCUG 17765 / NCTC 10094 / 16M</strain>
    </source>
</reference>
<name>URE32_BRUME</name>